<evidence type="ECO:0000250" key="1"/>
<evidence type="ECO:0000255" key="2"/>
<evidence type="ECO:0000305" key="3"/>
<comment type="function">
    <text evidence="1">Insect active toxin causing rapid but reversible paralysis in crickets. No activity shown in mammals. Does not show effect on mammalian voltage-gated calcium channels (By similarity).</text>
</comment>
<comment type="subcellular location">
    <subcellularLocation>
        <location evidence="1">Secreted</location>
    </subcellularLocation>
</comment>
<comment type="tissue specificity">
    <text>Expressed by the venom gland.</text>
</comment>
<comment type="domain">
    <text evidence="1">The presence of a 'disulfide through disulfide knot' structurally defines this protein as a knottin.</text>
</comment>
<comment type="similarity">
    <text evidence="3">Belongs to the neurotoxin 01 (U2-agtx) family.</text>
</comment>
<feature type="signal peptide" evidence="2">
    <location>
        <begin position="1"/>
        <end position="20"/>
    </location>
</feature>
<feature type="propeptide" id="PRO_5000093621" evidence="2">
    <location>
        <begin position="21"/>
        <end position="34"/>
    </location>
</feature>
<feature type="chain" id="PRO_5000093622" description="U2-agatoxin-Ao1j">
    <location>
        <begin position="35"/>
        <end position="69"/>
    </location>
</feature>
<feature type="modified residue" description="Leucine amide" evidence="1">
    <location>
        <position position="69"/>
    </location>
</feature>
<feature type="disulfide bond" evidence="1">
    <location>
        <begin position="37"/>
        <end position="53"/>
    </location>
</feature>
<feature type="disulfide bond" evidence="1">
    <location>
        <begin position="44"/>
        <end position="58"/>
    </location>
</feature>
<feature type="disulfide bond" evidence="1">
    <location>
        <begin position="52"/>
        <end position="68"/>
    </location>
</feature>
<name>TAG2J_AGEOR</name>
<sequence>MRAIISLLLISAMVFSMIAAVPEEEGLQLSEDERGGCLPHNRFCNALSGPRCCSGLRCKELSIWDSTCLG</sequence>
<protein>
    <recommendedName>
        <fullName>U2-agatoxin-Ao1j</fullName>
        <shortName>U2-AGTX-Ao1j</shortName>
    </recommendedName>
    <alternativeName>
        <fullName>Agel_09</fullName>
    </alternativeName>
</protein>
<proteinExistence type="evidence at transcript level"/>
<accession>Q5Y4X6</accession>
<reference key="1">
    <citation type="journal article" date="2005" name="Proteins">
        <title>A novel strategy for the identification of toxinlike structures in spider venom.</title>
        <authorList>
            <person name="Kozlov S.A."/>
            <person name="Malyavka A."/>
            <person name="McCutchen B."/>
            <person name="Lu A."/>
            <person name="Schepers E."/>
            <person name="Herrmann R."/>
            <person name="Grishin E.V."/>
        </authorList>
    </citation>
    <scope>NUCLEOTIDE SEQUENCE [MRNA]</scope>
    <source>
        <tissue>Venom gland</tissue>
    </source>
</reference>
<keyword id="KW-0027">Amidation</keyword>
<keyword id="KW-1015">Disulfide bond</keyword>
<keyword id="KW-0960">Knottin</keyword>
<keyword id="KW-0528">Neurotoxin</keyword>
<keyword id="KW-0964">Secreted</keyword>
<keyword id="KW-0732">Signal</keyword>
<keyword id="KW-0800">Toxin</keyword>
<dbReference type="EMBL" id="AY681306">
    <property type="protein sequence ID" value="AAU93664.1"/>
    <property type="molecule type" value="mRNA"/>
</dbReference>
<dbReference type="SMR" id="Q5Y4X6"/>
<dbReference type="ArachnoServer" id="AS000104">
    <property type="toxin name" value="U2-agatoxin-Ao1j"/>
</dbReference>
<dbReference type="GO" id="GO:0005576">
    <property type="term" value="C:extracellular region"/>
    <property type="evidence" value="ECO:0007669"/>
    <property type="project" value="UniProtKB-SubCell"/>
</dbReference>
<dbReference type="GO" id="GO:0090729">
    <property type="term" value="F:toxin activity"/>
    <property type="evidence" value="ECO:0007669"/>
    <property type="project" value="UniProtKB-KW"/>
</dbReference>
<dbReference type="Pfam" id="PF05980">
    <property type="entry name" value="Toxin_7"/>
    <property type="match status" value="1"/>
</dbReference>
<dbReference type="SUPFAM" id="SSF57059">
    <property type="entry name" value="omega toxin-like"/>
    <property type="match status" value="1"/>
</dbReference>
<organism>
    <name type="scientific">Agelena orientalis</name>
    <name type="common">Funnel-web spider</name>
    <dbReference type="NCBI Taxonomy" id="293813"/>
    <lineage>
        <taxon>Eukaryota</taxon>
        <taxon>Metazoa</taxon>
        <taxon>Ecdysozoa</taxon>
        <taxon>Arthropoda</taxon>
        <taxon>Chelicerata</taxon>
        <taxon>Arachnida</taxon>
        <taxon>Araneae</taxon>
        <taxon>Araneomorphae</taxon>
        <taxon>Entelegynae</taxon>
        <taxon>Agelenidae</taxon>
        <taxon>Agelena</taxon>
    </lineage>
</organism>